<organism>
    <name type="scientific">Photobacterium profundum (strain SS9)</name>
    <dbReference type="NCBI Taxonomy" id="298386"/>
    <lineage>
        <taxon>Bacteria</taxon>
        <taxon>Pseudomonadati</taxon>
        <taxon>Pseudomonadota</taxon>
        <taxon>Gammaproteobacteria</taxon>
        <taxon>Vibrionales</taxon>
        <taxon>Vibrionaceae</taxon>
        <taxon>Photobacterium</taxon>
    </lineage>
</organism>
<gene>
    <name evidence="1" type="primary">atpA1</name>
    <name type="ordered locus">PBPRA3606</name>
</gene>
<accession>Q6LLG6</accession>
<comment type="function">
    <text evidence="1">Produces ATP from ADP in the presence of a proton gradient across the membrane. The alpha chain is a regulatory subunit.</text>
</comment>
<comment type="catalytic activity">
    <reaction evidence="1">
        <text>ATP + H2O + 4 H(+)(in) = ADP + phosphate + 5 H(+)(out)</text>
        <dbReference type="Rhea" id="RHEA:57720"/>
        <dbReference type="ChEBI" id="CHEBI:15377"/>
        <dbReference type="ChEBI" id="CHEBI:15378"/>
        <dbReference type="ChEBI" id="CHEBI:30616"/>
        <dbReference type="ChEBI" id="CHEBI:43474"/>
        <dbReference type="ChEBI" id="CHEBI:456216"/>
        <dbReference type="EC" id="7.1.2.2"/>
    </reaction>
</comment>
<comment type="subunit">
    <text evidence="1">F-type ATPases have 2 components, CF(1) - the catalytic core - and CF(0) - the membrane proton channel. CF(1) has five subunits: alpha(3), beta(3), gamma(1), delta(1), epsilon(1). CF(0) has three main subunits: a(1), b(2) and c(9-12). The alpha and beta chains form an alternating ring which encloses part of the gamma chain. CF(1) is attached to CF(0) by a central stalk formed by the gamma and epsilon chains, while a peripheral stalk is formed by the delta and b chains.</text>
</comment>
<comment type="subcellular location">
    <subcellularLocation>
        <location evidence="1">Cell inner membrane</location>
        <topology evidence="1">Peripheral membrane protein</topology>
    </subcellularLocation>
</comment>
<comment type="similarity">
    <text evidence="1">Belongs to the ATPase alpha/beta chains family.</text>
</comment>
<name>ATPA1_PHOPR</name>
<keyword id="KW-0066">ATP synthesis</keyword>
<keyword id="KW-0067">ATP-binding</keyword>
<keyword id="KW-0997">Cell inner membrane</keyword>
<keyword id="KW-1003">Cell membrane</keyword>
<keyword id="KW-0139">CF(1)</keyword>
<keyword id="KW-0375">Hydrogen ion transport</keyword>
<keyword id="KW-0406">Ion transport</keyword>
<keyword id="KW-0472">Membrane</keyword>
<keyword id="KW-0547">Nucleotide-binding</keyword>
<keyword id="KW-1185">Reference proteome</keyword>
<keyword id="KW-1278">Translocase</keyword>
<keyword id="KW-0813">Transport</keyword>
<evidence type="ECO:0000255" key="1">
    <source>
        <dbReference type="HAMAP-Rule" id="MF_01346"/>
    </source>
</evidence>
<proteinExistence type="inferred from homology"/>
<reference key="1">
    <citation type="journal article" date="2005" name="Science">
        <title>Life at depth: Photobacterium profundum genome sequence and expression analysis.</title>
        <authorList>
            <person name="Vezzi A."/>
            <person name="Campanaro S."/>
            <person name="D'Angelo M."/>
            <person name="Simonato F."/>
            <person name="Vitulo N."/>
            <person name="Lauro F.M."/>
            <person name="Cestaro A."/>
            <person name="Malacrida G."/>
            <person name="Simionati B."/>
            <person name="Cannata N."/>
            <person name="Romualdi C."/>
            <person name="Bartlett D.H."/>
            <person name="Valle G."/>
        </authorList>
    </citation>
    <scope>NUCLEOTIDE SEQUENCE [LARGE SCALE GENOMIC DNA]</scope>
    <source>
        <strain>ATCC BAA-1253 / SS9</strain>
    </source>
</reference>
<dbReference type="EC" id="7.1.2.2" evidence="1"/>
<dbReference type="EMBL" id="CR378674">
    <property type="protein sequence ID" value="CAG21862.1"/>
    <property type="molecule type" value="Genomic_DNA"/>
</dbReference>
<dbReference type="RefSeq" id="WP_011220098.1">
    <property type="nucleotide sequence ID" value="NC_006370.1"/>
</dbReference>
<dbReference type="SMR" id="Q6LLG6"/>
<dbReference type="STRING" id="298386.PBPRA3606"/>
<dbReference type="KEGG" id="ppr:PBPRA3606"/>
<dbReference type="eggNOG" id="COG0056">
    <property type="taxonomic scope" value="Bacteria"/>
</dbReference>
<dbReference type="HOGENOM" id="CLU_010091_2_1_6"/>
<dbReference type="Proteomes" id="UP000000593">
    <property type="component" value="Chromosome 1"/>
</dbReference>
<dbReference type="GO" id="GO:0005886">
    <property type="term" value="C:plasma membrane"/>
    <property type="evidence" value="ECO:0007669"/>
    <property type="project" value="UniProtKB-SubCell"/>
</dbReference>
<dbReference type="GO" id="GO:0045259">
    <property type="term" value="C:proton-transporting ATP synthase complex"/>
    <property type="evidence" value="ECO:0007669"/>
    <property type="project" value="UniProtKB-KW"/>
</dbReference>
<dbReference type="GO" id="GO:0043531">
    <property type="term" value="F:ADP binding"/>
    <property type="evidence" value="ECO:0007669"/>
    <property type="project" value="TreeGrafter"/>
</dbReference>
<dbReference type="GO" id="GO:0005524">
    <property type="term" value="F:ATP binding"/>
    <property type="evidence" value="ECO:0007669"/>
    <property type="project" value="UniProtKB-UniRule"/>
</dbReference>
<dbReference type="GO" id="GO:0046933">
    <property type="term" value="F:proton-transporting ATP synthase activity, rotational mechanism"/>
    <property type="evidence" value="ECO:0007669"/>
    <property type="project" value="UniProtKB-UniRule"/>
</dbReference>
<dbReference type="CDD" id="cd18113">
    <property type="entry name" value="ATP-synt_F1_alpha_C"/>
    <property type="match status" value="1"/>
</dbReference>
<dbReference type="CDD" id="cd18116">
    <property type="entry name" value="ATP-synt_F1_alpha_N"/>
    <property type="match status" value="1"/>
</dbReference>
<dbReference type="CDD" id="cd01132">
    <property type="entry name" value="F1-ATPase_alpha_CD"/>
    <property type="match status" value="1"/>
</dbReference>
<dbReference type="FunFam" id="1.20.150.20:FF:000001">
    <property type="entry name" value="ATP synthase subunit alpha"/>
    <property type="match status" value="1"/>
</dbReference>
<dbReference type="FunFam" id="2.40.30.20:FF:000001">
    <property type="entry name" value="ATP synthase subunit alpha"/>
    <property type="match status" value="1"/>
</dbReference>
<dbReference type="FunFam" id="3.40.50.300:FF:000002">
    <property type="entry name" value="ATP synthase subunit alpha"/>
    <property type="match status" value="1"/>
</dbReference>
<dbReference type="Gene3D" id="2.40.30.20">
    <property type="match status" value="1"/>
</dbReference>
<dbReference type="Gene3D" id="1.20.150.20">
    <property type="entry name" value="ATP synthase alpha/beta chain, C-terminal domain"/>
    <property type="match status" value="1"/>
</dbReference>
<dbReference type="Gene3D" id="3.40.50.300">
    <property type="entry name" value="P-loop containing nucleotide triphosphate hydrolases"/>
    <property type="match status" value="1"/>
</dbReference>
<dbReference type="HAMAP" id="MF_01346">
    <property type="entry name" value="ATP_synth_alpha_bact"/>
    <property type="match status" value="1"/>
</dbReference>
<dbReference type="InterPro" id="IPR023366">
    <property type="entry name" value="ATP_synth_asu-like_sf"/>
</dbReference>
<dbReference type="InterPro" id="IPR000793">
    <property type="entry name" value="ATP_synth_asu_C"/>
</dbReference>
<dbReference type="InterPro" id="IPR038376">
    <property type="entry name" value="ATP_synth_asu_C_sf"/>
</dbReference>
<dbReference type="InterPro" id="IPR033732">
    <property type="entry name" value="ATP_synth_F1_a_nt-bd_dom"/>
</dbReference>
<dbReference type="InterPro" id="IPR005294">
    <property type="entry name" value="ATP_synth_F1_asu"/>
</dbReference>
<dbReference type="InterPro" id="IPR020003">
    <property type="entry name" value="ATPase_a/bsu_AS"/>
</dbReference>
<dbReference type="InterPro" id="IPR004100">
    <property type="entry name" value="ATPase_F1/V1/A1_a/bsu_N"/>
</dbReference>
<dbReference type="InterPro" id="IPR036121">
    <property type="entry name" value="ATPase_F1/V1/A1_a/bsu_N_sf"/>
</dbReference>
<dbReference type="InterPro" id="IPR000194">
    <property type="entry name" value="ATPase_F1/V1/A1_a/bsu_nucl-bd"/>
</dbReference>
<dbReference type="InterPro" id="IPR027417">
    <property type="entry name" value="P-loop_NTPase"/>
</dbReference>
<dbReference type="NCBIfam" id="TIGR00962">
    <property type="entry name" value="atpA"/>
    <property type="match status" value="1"/>
</dbReference>
<dbReference type="NCBIfam" id="NF009884">
    <property type="entry name" value="PRK13343.1"/>
    <property type="match status" value="1"/>
</dbReference>
<dbReference type="PANTHER" id="PTHR48082">
    <property type="entry name" value="ATP SYNTHASE SUBUNIT ALPHA, MITOCHONDRIAL"/>
    <property type="match status" value="1"/>
</dbReference>
<dbReference type="PANTHER" id="PTHR48082:SF2">
    <property type="entry name" value="ATP SYNTHASE SUBUNIT ALPHA, MITOCHONDRIAL"/>
    <property type="match status" value="1"/>
</dbReference>
<dbReference type="Pfam" id="PF00006">
    <property type="entry name" value="ATP-synt_ab"/>
    <property type="match status" value="1"/>
</dbReference>
<dbReference type="Pfam" id="PF00306">
    <property type="entry name" value="ATP-synt_ab_C"/>
    <property type="match status" value="1"/>
</dbReference>
<dbReference type="Pfam" id="PF02874">
    <property type="entry name" value="ATP-synt_ab_N"/>
    <property type="match status" value="1"/>
</dbReference>
<dbReference type="SUPFAM" id="SSF47917">
    <property type="entry name" value="C-terminal domain of alpha and beta subunits of F1 ATP synthase"/>
    <property type="match status" value="1"/>
</dbReference>
<dbReference type="SUPFAM" id="SSF50615">
    <property type="entry name" value="N-terminal domain of alpha and beta subunits of F1 ATP synthase"/>
    <property type="match status" value="1"/>
</dbReference>
<dbReference type="SUPFAM" id="SSF52540">
    <property type="entry name" value="P-loop containing nucleoside triphosphate hydrolases"/>
    <property type="match status" value="1"/>
</dbReference>
<dbReference type="PROSITE" id="PS00152">
    <property type="entry name" value="ATPASE_ALPHA_BETA"/>
    <property type="match status" value="1"/>
</dbReference>
<feature type="chain" id="PRO_0000238318" description="ATP synthase subunit alpha 1">
    <location>
        <begin position="1"/>
        <end position="513"/>
    </location>
</feature>
<feature type="binding site" evidence="1">
    <location>
        <begin position="169"/>
        <end position="176"/>
    </location>
    <ligand>
        <name>ATP</name>
        <dbReference type="ChEBI" id="CHEBI:30616"/>
    </ligand>
</feature>
<feature type="site" description="Required for activity" evidence="1">
    <location>
        <position position="373"/>
    </location>
</feature>
<protein>
    <recommendedName>
        <fullName evidence="1">ATP synthase subunit alpha 1</fullName>
        <ecNumber evidence="1">7.1.2.2</ecNumber>
    </recommendedName>
    <alternativeName>
        <fullName evidence="1">ATP synthase F1 sector subunit alpha 1</fullName>
    </alternativeName>
    <alternativeName>
        <fullName evidence="1">F-ATPase subunit alpha 1</fullName>
    </alternativeName>
</protein>
<sequence length="513" mass="55433">MQLNSTEISALIKQRIEKFNVASEARNEGTIVSVSDGIIRIHGLADVMQGEMIELPGGRFALALNLERDSVGAVVMGPYANLQEGMKVTGTGRILEVPVGPALLGRVVNTLGEPIDGKGPIETETFSPVEVIAPGVIERKSVDQPVQTGYKAVDSMIPIGRGQRELIIGDRQTGKTAMAIDAIINQKQSGIYSVYVAIGQKASTIANVVRKLEEHGALDNTIVVVASASEAAALQYLAPYSGCAMGEYFRDRGEDALIVYDDLSKQAVAYRQISLLLKRPPGREAFPGDVFYLHSRLLERASRVSENYVEKFTNGEVKGKTGSLTALPIIETQAGDVSAFVPTNVISITDGQIFLQTELFNAGIRPAVDPGISVSRVGGSAQTKIIKKLSGGIRTALAQYRELAAFAQFSSDLDEATKKQLDHGQKVTELMKQKQYAPMSVFEQAVVIFSAERGYLVDVELAKLADFEAALLSYAKGQSAELVSQIDETGAWNSEIEAQFVKLVEDFKATQTW</sequence>